<feature type="signal peptide" evidence="2">
    <location>
        <begin position="1"/>
        <end position="23"/>
    </location>
</feature>
<feature type="chain" id="PRO_0000032413" description="Alpha-1-antichymotrypsin">
    <location>
        <begin position="24"/>
        <end position="423"/>
    </location>
</feature>
<feature type="region of interest" description="RCL">
    <location>
        <begin position="369"/>
        <end position="394"/>
    </location>
</feature>
<feature type="site" description="Reactive bond" evidence="1">
    <location>
        <begin position="383"/>
        <end position="384"/>
    </location>
</feature>
<feature type="glycosylation site" description="N-linked (GlcNAc...) asparagine" evidence="2">
    <location>
        <position position="93"/>
    </location>
</feature>
<feature type="glycosylation site" description="N-linked (GlcNAc...) asparagine" evidence="2">
    <location>
        <position position="106"/>
    </location>
</feature>
<feature type="glycosylation site" description="N-linked (GlcNAc...) asparagine" evidence="2">
    <location>
        <position position="127"/>
    </location>
</feature>
<feature type="glycosylation site" description="N-linked (GlcNAc...) asparagine" evidence="2">
    <location>
        <position position="186"/>
    </location>
</feature>
<feature type="glycosylation site" description="N-linked (GlcNAc...) asparagine" evidence="2">
    <location>
        <position position="271"/>
    </location>
</feature>
<protein>
    <recommendedName>
        <fullName>Alpha-1-antichymotrypsin</fullName>
        <shortName>ACT</shortName>
    </recommendedName>
    <alternativeName>
        <fullName>Serpin A3</fullName>
    </alternativeName>
</protein>
<comment type="function">
    <text evidence="1">Although its physiological function is unclear, it can inhibit neutrophil cathepsin G and mast cell chymase, both of which can convert angiotensin-1 to the active angiotensin-2.</text>
</comment>
<comment type="subunit">
    <text evidence="1">Interacts with DNAJC1.</text>
</comment>
<comment type="subcellular location">
    <subcellularLocation>
        <location evidence="1">Secreted</location>
    </subcellularLocation>
</comment>
<comment type="tissue specificity">
    <text>Plasma.</text>
</comment>
<comment type="domain">
    <text evidence="1">The reactive center loop (RCL) extends out from the body of the protein and directs binding to the target protease. The protease cleaves the serpin at the reactive site within the RCL, establishing a covalent linkage between the carboxyl group of the serpin reactive site and the serine hydroxyl of the protease. The resulting inactive serpin-protease complex is highly stable (By similarity).</text>
</comment>
<comment type="similarity">
    <text evidence="3">Belongs to the serpin family.</text>
</comment>
<organism>
    <name type="scientific">Pongo abelii</name>
    <name type="common">Sumatran orangutan</name>
    <name type="synonym">Pongo pygmaeus abelii</name>
    <dbReference type="NCBI Taxonomy" id="9601"/>
    <lineage>
        <taxon>Eukaryota</taxon>
        <taxon>Metazoa</taxon>
        <taxon>Chordata</taxon>
        <taxon>Craniata</taxon>
        <taxon>Vertebrata</taxon>
        <taxon>Euteleostomi</taxon>
        <taxon>Mammalia</taxon>
        <taxon>Eutheria</taxon>
        <taxon>Euarchontoglires</taxon>
        <taxon>Primates</taxon>
        <taxon>Haplorrhini</taxon>
        <taxon>Catarrhini</taxon>
        <taxon>Hominidae</taxon>
        <taxon>Pongo</taxon>
    </lineage>
</organism>
<accession>Q5R536</accession>
<name>AACT_PONAB</name>
<gene>
    <name type="primary">SERPINA3</name>
    <name type="synonym">AACT</name>
</gene>
<proteinExistence type="evidence at transcript level"/>
<dbReference type="EMBL" id="CR861039">
    <property type="protein sequence ID" value="CAH93130.1"/>
    <property type="molecule type" value="mRNA"/>
</dbReference>
<dbReference type="RefSeq" id="NP_001126852.1">
    <property type="nucleotide sequence ID" value="NM_001133380.1"/>
</dbReference>
<dbReference type="SMR" id="Q5R536"/>
<dbReference type="FunCoup" id="Q5R536">
    <property type="interactions" value="92"/>
</dbReference>
<dbReference type="STRING" id="9601.ENSPPYP00000006946"/>
<dbReference type="MEROPS" id="I04.002"/>
<dbReference type="GlyCosmos" id="Q5R536">
    <property type="glycosylation" value="5 sites, No reported glycans"/>
</dbReference>
<dbReference type="GeneID" id="100173860"/>
<dbReference type="KEGG" id="pon:100173860"/>
<dbReference type="CTD" id="12"/>
<dbReference type="eggNOG" id="KOG2392">
    <property type="taxonomic scope" value="Eukaryota"/>
</dbReference>
<dbReference type="HOGENOM" id="CLU_023330_2_1_1"/>
<dbReference type="InParanoid" id="Q5R536"/>
<dbReference type="OrthoDB" id="671595at2759"/>
<dbReference type="TreeFam" id="TF343201"/>
<dbReference type="Proteomes" id="UP000001595">
    <property type="component" value="Chromosome 14"/>
</dbReference>
<dbReference type="GO" id="GO:0005615">
    <property type="term" value="C:extracellular space"/>
    <property type="evidence" value="ECO:0007669"/>
    <property type="project" value="InterPro"/>
</dbReference>
<dbReference type="GO" id="GO:0004867">
    <property type="term" value="F:serine-type endopeptidase inhibitor activity"/>
    <property type="evidence" value="ECO:0007669"/>
    <property type="project" value="UniProtKB-KW"/>
</dbReference>
<dbReference type="GO" id="GO:0006953">
    <property type="term" value="P:acute-phase response"/>
    <property type="evidence" value="ECO:0007669"/>
    <property type="project" value="UniProtKB-KW"/>
</dbReference>
<dbReference type="CDD" id="cd19551">
    <property type="entry name" value="serpinA3_A1AC"/>
    <property type="match status" value="1"/>
</dbReference>
<dbReference type="FunFam" id="3.30.497.10:FF:000001">
    <property type="entry name" value="Serine protease inhibitor"/>
    <property type="match status" value="1"/>
</dbReference>
<dbReference type="FunFam" id="2.30.39.10:FF:000002">
    <property type="entry name" value="Serpin family D member 1"/>
    <property type="match status" value="1"/>
</dbReference>
<dbReference type="Gene3D" id="2.30.39.10">
    <property type="entry name" value="Alpha-1-antitrypsin, domain 1"/>
    <property type="match status" value="1"/>
</dbReference>
<dbReference type="Gene3D" id="3.30.497.10">
    <property type="entry name" value="Antithrombin, subunit I, domain 2"/>
    <property type="match status" value="1"/>
</dbReference>
<dbReference type="InterPro" id="IPR023795">
    <property type="entry name" value="Serpin_CS"/>
</dbReference>
<dbReference type="InterPro" id="IPR023796">
    <property type="entry name" value="Serpin_dom"/>
</dbReference>
<dbReference type="InterPro" id="IPR000215">
    <property type="entry name" value="Serpin_fam"/>
</dbReference>
<dbReference type="InterPro" id="IPR036186">
    <property type="entry name" value="Serpin_sf"/>
</dbReference>
<dbReference type="InterPro" id="IPR042178">
    <property type="entry name" value="Serpin_sf_1"/>
</dbReference>
<dbReference type="InterPro" id="IPR042185">
    <property type="entry name" value="Serpin_sf_2"/>
</dbReference>
<dbReference type="PANTHER" id="PTHR11461:SF145">
    <property type="entry name" value="ALPHA-1-ANTICHYMOTRYPSIN"/>
    <property type="match status" value="1"/>
</dbReference>
<dbReference type="PANTHER" id="PTHR11461">
    <property type="entry name" value="SERINE PROTEASE INHIBITOR, SERPIN"/>
    <property type="match status" value="1"/>
</dbReference>
<dbReference type="Pfam" id="PF00079">
    <property type="entry name" value="Serpin"/>
    <property type="match status" value="1"/>
</dbReference>
<dbReference type="SMART" id="SM00093">
    <property type="entry name" value="SERPIN"/>
    <property type="match status" value="1"/>
</dbReference>
<dbReference type="SUPFAM" id="SSF56574">
    <property type="entry name" value="Serpins"/>
    <property type="match status" value="1"/>
</dbReference>
<dbReference type="PROSITE" id="PS00284">
    <property type="entry name" value="SERPIN"/>
    <property type="match status" value="1"/>
</dbReference>
<keyword id="KW-0011">Acute phase</keyword>
<keyword id="KW-0325">Glycoprotein</keyword>
<keyword id="KW-0646">Protease inhibitor</keyword>
<keyword id="KW-1185">Reference proteome</keyword>
<keyword id="KW-0964">Secreted</keyword>
<keyword id="KW-0722">Serine protease inhibitor</keyword>
<keyword id="KW-0732">Signal</keyword>
<sequence length="423" mass="47815">MERMLPFLALGLLVAGFCPAVLCHPNCPLDEENPTQENQDRGTHVDLGLASTNVDFAFSLYKQLVLKAPDKNVIFSPLSISTALAFLSLGAHNTTLTEILTGLRFNLTETSEAEIHQSFQHLLRTLNQSSDELQLSMGNAMFVEEQLSLLDRFMEDAKRLYGSEAFATDFQDSAAAKKLINDYVKNRTRGKITDLIKDLDSQTMMVLVNYIFFKAKWKMPFDPQDTHQSRFYLSKKKWVMVPMMSLHHLTTPYFRDEELSCTVVELKYTGNASALFILPDQDKMEEVEAMLLPETLKRWRDSLEFRRIDELYLPKFSISRAFNLENILLQLGIVEAFTSKADLSGITGARNLVVSQVVHKAVLDVFEEGTEASAATAVKITLLSALVDPMTIVRFNRPFLMIIVPTDTQNLLFISKVINPKQA</sequence>
<reference key="1">
    <citation type="submission" date="2004-11" db="EMBL/GenBank/DDBJ databases">
        <authorList>
            <consortium name="The German cDNA consortium"/>
        </authorList>
    </citation>
    <scope>NUCLEOTIDE SEQUENCE [LARGE SCALE MRNA]</scope>
    <source>
        <tissue>Liver</tissue>
    </source>
</reference>
<evidence type="ECO:0000250" key="1"/>
<evidence type="ECO:0000255" key="2"/>
<evidence type="ECO:0000305" key="3"/>